<organism>
    <name type="scientific">Burkholderia orbicola (strain MC0-3)</name>
    <dbReference type="NCBI Taxonomy" id="406425"/>
    <lineage>
        <taxon>Bacteria</taxon>
        <taxon>Pseudomonadati</taxon>
        <taxon>Pseudomonadota</taxon>
        <taxon>Betaproteobacteria</taxon>
        <taxon>Burkholderiales</taxon>
        <taxon>Burkholderiaceae</taxon>
        <taxon>Burkholderia</taxon>
        <taxon>Burkholderia cepacia complex</taxon>
        <taxon>Burkholderia orbicola</taxon>
    </lineage>
</organism>
<protein>
    <recommendedName>
        <fullName evidence="1">UDP-N-acetylglucosamine--N-acetylmuramyl-(pentapeptide) pyrophosphoryl-undecaprenol N-acetylglucosamine transferase</fullName>
        <ecNumber evidence="1">2.4.1.227</ecNumber>
    </recommendedName>
    <alternativeName>
        <fullName evidence="1">Undecaprenyl-PP-MurNAc-pentapeptide-UDPGlcNAc GlcNAc transferase</fullName>
    </alternativeName>
</protein>
<feature type="chain" id="PRO_1000090410" description="UDP-N-acetylglucosamine--N-acetylmuramyl-(pentapeptide) pyrophosphoryl-undecaprenol N-acetylglucosamine transferase">
    <location>
        <begin position="1"/>
        <end position="367"/>
    </location>
</feature>
<feature type="binding site" evidence="1">
    <location>
        <begin position="15"/>
        <end position="17"/>
    </location>
    <ligand>
        <name>UDP-N-acetyl-alpha-D-glucosamine</name>
        <dbReference type="ChEBI" id="CHEBI:57705"/>
    </ligand>
</feature>
<feature type="binding site" evidence="1">
    <location>
        <position position="127"/>
    </location>
    <ligand>
        <name>UDP-N-acetyl-alpha-D-glucosamine</name>
        <dbReference type="ChEBI" id="CHEBI:57705"/>
    </ligand>
</feature>
<feature type="binding site" evidence="1">
    <location>
        <position position="163"/>
    </location>
    <ligand>
        <name>UDP-N-acetyl-alpha-D-glucosamine</name>
        <dbReference type="ChEBI" id="CHEBI:57705"/>
    </ligand>
</feature>
<feature type="binding site" evidence="1">
    <location>
        <position position="191"/>
    </location>
    <ligand>
        <name>UDP-N-acetyl-alpha-D-glucosamine</name>
        <dbReference type="ChEBI" id="CHEBI:57705"/>
    </ligand>
</feature>
<feature type="binding site" evidence="1">
    <location>
        <position position="249"/>
    </location>
    <ligand>
        <name>UDP-N-acetyl-alpha-D-glucosamine</name>
        <dbReference type="ChEBI" id="CHEBI:57705"/>
    </ligand>
</feature>
<feature type="binding site" evidence="1">
    <location>
        <position position="294"/>
    </location>
    <ligand>
        <name>UDP-N-acetyl-alpha-D-glucosamine</name>
        <dbReference type="ChEBI" id="CHEBI:57705"/>
    </ligand>
</feature>
<gene>
    <name evidence="1" type="primary">murG</name>
    <name type="ordered locus">Bcenmc03_0530</name>
</gene>
<reference key="1">
    <citation type="submission" date="2008-02" db="EMBL/GenBank/DDBJ databases">
        <title>Complete sequence of chromosome 1 of Burkholderia cenocepacia MC0-3.</title>
        <authorList>
            <person name="Copeland A."/>
            <person name="Lucas S."/>
            <person name="Lapidus A."/>
            <person name="Barry K."/>
            <person name="Bruce D."/>
            <person name="Goodwin L."/>
            <person name="Glavina del Rio T."/>
            <person name="Dalin E."/>
            <person name="Tice H."/>
            <person name="Pitluck S."/>
            <person name="Chain P."/>
            <person name="Malfatti S."/>
            <person name="Shin M."/>
            <person name="Vergez L."/>
            <person name="Schmutz J."/>
            <person name="Larimer F."/>
            <person name="Land M."/>
            <person name="Hauser L."/>
            <person name="Kyrpides N."/>
            <person name="Mikhailova N."/>
            <person name="Tiedje J."/>
            <person name="Richardson P."/>
        </authorList>
    </citation>
    <scope>NUCLEOTIDE SEQUENCE [LARGE SCALE GENOMIC DNA]</scope>
    <source>
        <strain>MC0-3</strain>
    </source>
</reference>
<keyword id="KW-0131">Cell cycle</keyword>
<keyword id="KW-0132">Cell division</keyword>
<keyword id="KW-0997">Cell inner membrane</keyword>
<keyword id="KW-1003">Cell membrane</keyword>
<keyword id="KW-0133">Cell shape</keyword>
<keyword id="KW-0961">Cell wall biogenesis/degradation</keyword>
<keyword id="KW-0328">Glycosyltransferase</keyword>
<keyword id="KW-0472">Membrane</keyword>
<keyword id="KW-0573">Peptidoglycan synthesis</keyword>
<keyword id="KW-0808">Transferase</keyword>
<name>MURG_BURO0</name>
<proteinExistence type="inferred from homology"/>
<comment type="function">
    <text evidence="1">Cell wall formation. Catalyzes the transfer of a GlcNAc subunit on undecaprenyl-pyrophosphoryl-MurNAc-pentapeptide (lipid intermediate I) to form undecaprenyl-pyrophosphoryl-MurNAc-(pentapeptide)GlcNAc (lipid intermediate II).</text>
</comment>
<comment type="catalytic activity">
    <reaction evidence="1">
        <text>di-trans,octa-cis-undecaprenyl diphospho-N-acetyl-alpha-D-muramoyl-L-alanyl-D-glutamyl-meso-2,6-diaminopimeloyl-D-alanyl-D-alanine + UDP-N-acetyl-alpha-D-glucosamine = di-trans,octa-cis-undecaprenyl diphospho-[N-acetyl-alpha-D-glucosaminyl-(1-&gt;4)]-N-acetyl-alpha-D-muramoyl-L-alanyl-D-glutamyl-meso-2,6-diaminopimeloyl-D-alanyl-D-alanine + UDP + H(+)</text>
        <dbReference type="Rhea" id="RHEA:31227"/>
        <dbReference type="ChEBI" id="CHEBI:15378"/>
        <dbReference type="ChEBI" id="CHEBI:57705"/>
        <dbReference type="ChEBI" id="CHEBI:58223"/>
        <dbReference type="ChEBI" id="CHEBI:61387"/>
        <dbReference type="ChEBI" id="CHEBI:61388"/>
        <dbReference type="EC" id="2.4.1.227"/>
    </reaction>
</comment>
<comment type="pathway">
    <text evidence="1">Cell wall biogenesis; peptidoglycan biosynthesis.</text>
</comment>
<comment type="subcellular location">
    <subcellularLocation>
        <location evidence="1">Cell inner membrane</location>
        <topology evidence="1">Peripheral membrane protein</topology>
        <orientation evidence="1">Cytoplasmic side</orientation>
    </subcellularLocation>
</comment>
<comment type="similarity">
    <text evidence="1">Belongs to the glycosyltransferase 28 family. MurG subfamily.</text>
</comment>
<dbReference type="EC" id="2.4.1.227" evidence="1"/>
<dbReference type="EMBL" id="CP000958">
    <property type="protein sequence ID" value="ACA89708.1"/>
    <property type="molecule type" value="Genomic_DNA"/>
</dbReference>
<dbReference type="RefSeq" id="WP_012327852.1">
    <property type="nucleotide sequence ID" value="NC_010508.1"/>
</dbReference>
<dbReference type="SMR" id="B1JV78"/>
<dbReference type="CAZy" id="GT28">
    <property type="family name" value="Glycosyltransferase Family 28"/>
</dbReference>
<dbReference type="GeneID" id="83047331"/>
<dbReference type="KEGG" id="bcm:Bcenmc03_0530"/>
<dbReference type="HOGENOM" id="CLU_037404_2_0_4"/>
<dbReference type="UniPathway" id="UPA00219"/>
<dbReference type="Proteomes" id="UP000002169">
    <property type="component" value="Chromosome 1"/>
</dbReference>
<dbReference type="GO" id="GO:0005886">
    <property type="term" value="C:plasma membrane"/>
    <property type="evidence" value="ECO:0007669"/>
    <property type="project" value="UniProtKB-SubCell"/>
</dbReference>
<dbReference type="GO" id="GO:0051991">
    <property type="term" value="F:UDP-N-acetyl-D-glucosamine:N-acetylmuramoyl-L-alanyl-D-glutamyl-meso-2,6-diaminopimelyl-D-alanyl-D-alanine-diphosphoundecaprenol 4-beta-N-acetylglucosaminlytransferase activity"/>
    <property type="evidence" value="ECO:0007669"/>
    <property type="project" value="RHEA"/>
</dbReference>
<dbReference type="GO" id="GO:0050511">
    <property type="term" value="F:undecaprenyldiphospho-muramoylpentapeptide beta-N-acetylglucosaminyltransferase activity"/>
    <property type="evidence" value="ECO:0007669"/>
    <property type="project" value="UniProtKB-UniRule"/>
</dbReference>
<dbReference type="GO" id="GO:0005975">
    <property type="term" value="P:carbohydrate metabolic process"/>
    <property type="evidence" value="ECO:0007669"/>
    <property type="project" value="InterPro"/>
</dbReference>
<dbReference type="GO" id="GO:0051301">
    <property type="term" value="P:cell division"/>
    <property type="evidence" value="ECO:0007669"/>
    <property type="project" value="UniProtKB-KW"/>
</dbReference>
<dbReference type="GO" id="GO:0071555">
    <property type="term" value="P:cell wall organization"/>
    <property type="evidence" value="ECO:0007669"/>
    <property type="project" value="UniProtKB-KW"/>
</dbReference>
<dbReference type="GO" id="GO:0030259">
    <property type="term" value="P:lipid glycosylation"/>
    <property type="evidence" value="ECO:0007669"/>
    <property type="project" value="UniProtKB-UniRule"/>
</dbReference>
<dbReference type="GO" id="GO:0009252">
    <property type="term" value="P:peptidoglycan biosynthetic process"/>
    <property type="evidence" value="ECO:0007669"/>
    <property type="project" value="UniProtKB-UniRule"/>
</dbReference>
<dbReference type="GO" id="GO:0008360">
    <property type="term" value="P:regulation of cell shape"/>
    <property type="evidence" value="ECO:0007669"/>
    <property type="project" value="UniProtKB-KW"/>
</dbReference>
<dbReference type="CDD" id="cd03785">
    <property type="entry name" value="GT28_MurG"/>
    <property type="match status" value="1"/>
</dbReference>
<dbReference type="Gene3D" id="3.40.50.2000">
    <property type="entry name" value="Glycogen Phosphorylase B"/>
    <property type="match status" value="2"/>
</dbReference>
<dbReference type="HAMAP" id="MF_00033">
    <property type="entry name" value="MurG"/>
    <property type="match status" value="1"/>
</dbReference>
<dbReference type="InterPro" id="IPR006009">
    <property type="entry name" value="GlcNAc_MurG"/>
</dbReference>
<dbReference type="InterPro" id="IPR007235">
    <property type="entry name" value="Glyco_trans_28_C"/>
</dbReference>
<dbReference type="InterPro" id="IPR004276">
    <property type="entry name" value="GlycoTrans_28_N"/>
</dbReference>
<dbReference type="NCBIfam" id="TIGR01133">
    <property type="entry name" value="murG"/>
    <property type="match status" value="1"/>
</dbReference>
<dbReference type="PANTHER" id="PTHR21015:SF22">
    <property type="entry name" value="GLYCOSYLTRANSFERASE"/>
    <property type="match status" value="1"/>
</dbReference>
<dbReference type="PANTHER" id="PTHR21015">
    <property type="entry name" value="UDP-N-ACETYLGLUCOSAMINE--N-ACETYLMURAMYL-(PENTAPEPTIDE) PYROPHOSPHORYL-UNDECAPRENOL N-ACETYLGLUCOSAMINE TRANSFERASE 1"/>
    <property type="match status" value="1"/>
</dbReference>
<dbReference type="Pfam" id="PF04101">
    <property type="entry name" value="Glyco_tran_28_C"/>
    <property type="match status" value="1"/>
</dbReference>
<dbReference type="Pfam" id="PF03033">
    <property type="entry name" value="Glyco_transf_28"/>
    <property type="match status" value="1"/>
</dbReference>
<dbReference type="SUPFAM" id="SSF53756">
    <property type="entry name" value="UDP-Glycosyltransferase/glycogen phosphorylase"/>
    <property type="match status" value="1"/>
</dbReference>
<accession>B1JV78</accession>
<sequence>MTASQRTLMVMAGGTGGHVFPGLAVAHRMEAAGWRVVWLGNPAGMEATLVPKHGIPMEYVRFGGLRGKGLKTKLTLPVNLLRACWQSLGALRRVRPDVVLGMGGYITFPAGVMTALSGRPLVLHEQNSIAGLTNKVLAKLAKRVLVAFPGALPHAEWTGNPIRAELARTEPPQARYASRSGPLNVLVVGGSLGAAALNEVVPRALALLAPGERPRVVHQAGVKHIEALKANYEAAGFAAGEGVRLVPFIDDMAAAYAAADLVICRSGAMTVSEIAAVGVAALFVPFPYAVDDHQTTNAAFLADAGAAVLVQQRDLSAELLADWLRGQSRASLAAMAERSRTLAKPEATDEVARVCAKAAGANLEILQ</sequence>
<evidence type="ECO:0000255" key="1">
    <source>
        <dbReference type="HAMAP-Rule" id="MF_00033"/>
    </source>
</evidence>